<dbReference type="EMBL" id="D13458">
    <property type="protein sequence ID" value="BAA02714.1"/>
    <property type="molecule type" value="mRNA"/>
</dbReference>
<dbReference type="EMBL" id="U70365">
    <property type="protein sequence ID" value="AAC52897.1"/>
    <property type="molecule type" value="Genomic_DNA"/>
</dbReference>
<dbReference type="CCDS" id="CCDS27365.1"/>
<dbReference type="PIR" id="A46638">
    <property type="entry name" value="A46638"/>
</dbReference>
<dbReference type="RefSeq" id="NP_032991.1">
    <property type="nucleotide sequence ID" value="NM_008965.2"/>
</dbReference>
<dbReference type="SMR" id="P32240"/>
<dbReference type="CORUM" id="P32240"/>
<dbReference type="FunCoup" id="P32240">
    <property type="interactions" value="706"/>
</dbReference>
<dbReference type="STRING" id="10090.ENSMUSP00000048736"/>
<dbReference type="BindingDB" id="P32240"/>
<dbReference type="ChEMBL" id="CHEMBL2489"/>
<dbReference type="DrugCentral" id="P32240"/>
<dbReference type="GuidetoPHARMACOLOGY" id="343"/>
<dbReference type="GlyCosmos" id="P32240">
    <property type="glycosylation" value="1 site, No reported glycans"/>
</dbReference>
<dbReference type="GlyGen" id="P32240">
    <property type="glycosylation" value="1 site"/>
</dbReference>
<dbReference type="iPTMnet" id="P32240"/>
<dbReference type="PhosphoSitePlus" id="P32240"/>
<dbReference type="PaxDb" id="10090-ENSMUSP00000048736"/>
<dbReference type="PeptideAtlas" id="P32240"/>
<dbReference type="ProteomicsDB" id="287665"/>
<dbReference type="Antibodypedia" id="2762">
    <property type="antibodies" value="371 antibodies from 35 providers"/>
</dbReference>
<dbReference type="DNASU" id="19219"/>
<dbReference type="Ensembl" id="ENSMUST00000047379.15">
    <property type="protein sequence ID" value="ENSMUSP00000048736.9"/>
    <property type="gene ID" value="ENSMUSG00000039942.16"/>
</dbReference>
<dbReference type="GeneID" id="19219"/>
<dbReference type="KEGG" id="mmu:19219"/>
<dbReference type="UCSC" id="uc007vcy.3">
    <property type="organism name" value="mouse"/>
</dbReference>
<dbReference type="AGR" id="MGI:104311"/>
<dbReference type="CTD" id="5734"/>
<dbReference type="MGI" id="MGI:104311">
    <property type="gene designation" value="Ptger4"/>
</dbReference>
<dbReference type="VEuPathDB" id="HostDB:ENSMUSG00000039942"/>
<dbReference type="eggNOG" id="KOG3656">
    <property type="taxonomic scope" value="Eukaryota"/>
</dbReference>
<dbReference type="GeneTree" id="ENSGT01050000244902"/>
<dbReference type="InParanoid" id="P32240"/>
<dbReference type="OMA" id="VGHVVWR"/>
<dbReference type="OrthoDB" id="5959154at2759"/>
<dbReference type="PhylomeDB" id="P32240"/>
<dbReference type="TreeFam" id="TF324982"/>
<dbReference type="Reactome" id="R-MMU-391908">
    <property type="pathway name" value="Prostanoid ligand receptors"/>
</dbReference>
<dbReference type="Reactome" id="R-MMU-418555">
    <property type="pathway name" value="G alpha (s) signalling events"/>
</dbReference>
<dbReference type="BioGRID-ORCS" id="19219">
    <property type="hits" value="4 hits in 77 CRISPR screens"/>
</dbReference>
<dbReference type="ChiTaRS" id="Ptger4">
    <property type="organism name" value="mouse"/>
</dbReference>
<dbReference type="PRO" id="PR:P32240"/>
<dbReference type="Proteomes" id="UP000000589">
    <property type="component" value="Chromosome 15"/>
</dbReference>
<dbReference type="RNAct" id="P32240">
    <property type="molecule type" value="protein"/>
</dbReference>
<dbReference type="Bgee" id="ENSMUSG00000039942">
    <property type="expression patterns" value="Expressed in renal corpuscle and 195 other cell types or tissues"/>
</dbReference>
<dbReference type="ExpressionAtlas" id="P32240">
    <property type="expression patterns" value="baseline and differential"/>
</dbReference>
<dbReference type="GO" id="GO:0005886">
    <property type="term" value="C:plasma membrane"/>
    <property type="evidence" value="ECO:0007669"/>
    <property type="project" value="UniProtKB-SubCell"/>
</dbReference>
<dbReference type="GO" id="GO:0004957">
    <property type="term" value="F:prostaglandin E receptor activity"/>
    <property type="evidence" value="ECO:0000250"/>
    <property type="project" value="UniProtKB"/>
</dbReference>
<dbReference type="GO" id="GO:0007189">
    <property type="term" value="P:adenylate cyclase-activating G protein-coupled receptor signaling pathway"/>
    <property type="evidence" value="ECO:0000304"/>
    <property type="project" value="MGI"/>
</dbReference>
<dbReference type="GO" id="GO:0007188">
    <property type="term" value="P:adenylate cyclase-modulating G protein-coupled receptor signaling pathway"/>
    <property type="evidence" value="ECO:0000250"/>
    <property type="project" value="UniProtKB"/>
</dbReference>
<dbReference type="GO" id="GO:0060348">
    <property type="term" value="P:bone development"/>
    <property type="evidence" value="ECO:0000250"/>
    <property type="project" value="UniProtKB"/>
</dbReference>
<dbReference type="GO" id="GO:0071260">
    <property type="term" value="P:cellular response to mechanical stimulus"/>
    <property type="evidence" value="ECO:0000270"/>
    <property type="project" value="UniProtKB"/>
</dbReference>
<dbReference type="GO" id="GO:0070371">
    <property type="term" value="P:ERK1 and ERK2 cascade"/>
    <property type="evidence" value="ECO:0000250"/>
    <property type="project" value="UniProtKB"/>
</dbReference>
<dbReference type="GO" id="GO:0007254">
    <property type="term" value="P:JNK cascade"/>
    <property type="evidence" value="ECO:0000250"/>
    <property type="project" value="UniProtKB"/>
</dbReference>
<dbReference type="GO" id="GO:0001818">
    <property type="term" value="P:negative regulation of cytokine production"/>
    <property type="evidence" value="ECO:0000315"/>
    <property type="project" value="UniProtKB"/>
</dbReference>
<dbReference type="GO" id="GO:2000420">
    <property type="term" value="P:negative regulation of eosinophil extravasation"/>
    <property type="evidence" value="ECO:0000250"/>
    <property type="project" value="UniProtKB"/>
</dbReference>
<dbReference type="GO" id="GO:0050728">
    <property type="term" value="P:negative regulation of inflammatory response"/>
    <property type="evidence" value="ECO:0000315"/>
    <property type="project" value="MGI"/>
</dbReference>
<dbReference type="GO" id="GO:0033624">
    <property type="term" value="P:negative regulation of integrin activation"/>
    <property type="evidence" value="ECO:0000250"/>
    <property type="project" value="UniProtKB"/>
</dbReference>
<dbReference type="GO" id="GO:0001819">
    <property type="term" value="P:positive regulation of cytokine production"/>
    <property type="evidence" value="ECO:0000314"/>
    <property type="project" value="UniProtKB"/>
</dbReference>
<dbReference type="GO" id="GO:0050729">
    <property type="term" value="P:positive regulation of inflammatory response"/>
    <property type="evidence" value="ECO:0000314"/>
    <property type="project" value="UniProtKB"/>
</dbReference>
<dbReference type="GO" id="GO:0030278">
    <property type="term" value="P:regulation of ossification"/>
    <property type="evidence" value="ECO:0000315"/>
    <property type="project" value="MGI"/>
</dbReference>
<dbReference type="GO" id="GO:0051492">
    <property type="term" value="P:regulation of stress fiber assembly"/>
    <property type="evidence" value="ECO:0000314"/>
    <property type="project" value="UniProtKB"/>
</dbReference>
<dbReference type="GO" id="GO:0032496">
    <property type="term" value="P:response to lipopolysaccharide"/>
    <property type="evidence" value="ECO:0000315"/>
    <property type="project" value="MGI"/>
</dbReference>
<dbReference type="GO" id="GO:0009624">
    <property type="term" value="P:response to nematode"/>
    <property type="evidence" value="ECO:0000315"/>
    <property type="project" value="MGI"/>
</dbReference>
<dbReference type="GO" id="GO:0042093">
    <property type="term" value="P:T-helper cell differentiation"/>
    <property type="evidence" value="ECO:0000314"/>
    <property type="project" value="UniProtKB"/>
</dbReference>
<dbReference type="CDD" id="cd15142">
    <property type="entry name" value="7tmA_PGE2_EP4"/>
    <property type="match status" value="1"/>
</dbReference>
<dbReference type="FunFam" id="1.20.1070.10:FF:000101">
    <property type="entry name" value="Prostaglandin E2 receptor EP4 subtype"/>
    <property type="match status" value="1"/>
</dbReference>
<dbReference type="Gene3D" id="1.20.1070.10">
    <property type="entry name" value="Rhodopsin 7-helix transmembrane proteins"/>
    <property type="match status" value="1"/>
</dbReference>
<dbReference type="InterPro" id="IPR000276">
    <property type="entry name" value="GPCR_Rhodpsn"/>
</dbReference>
<dbReference type="InterPro" id="IPR017452">
    <property type="entry name" value="GPCR_Rhodpsn_7TM"/>
</dbReference>
<dbReference type="InterPro" id="IPR001758">
    <property type="entry name" value="Prost_EP4_rcpt"/>
</dbReference>
<dbReference type="InterPro" id="IPR008365">
    <property type="entry name" value="Prostanoid_rcpt"/>
</dbReference>
<dbReference type="InterPro" id="IPR001244">
    <property type="entry name" value="Prostglndn_DP_rcpt"/>
</dbReference>
<dbReference type="PANTHER" id="PTHR11866">
    <property type="entry name" value="G-PROTEIN COUPLED RECEPTOR FAMILY 1 MEMBER"/>
    <property type="match status" value="1"/>
</dbReference>
<dbReference type="PANTHER" id="PTHR11866:SF6">
    <property type="entry name" value="PROSTAGLANDIN E2 RECEPTOR EP4 SUBTYPE"/>
    <property type="match status" value="1"/>
</dbReference>
<dbReference type="Pfam" id="PF00001">
    <property type="entry name" value="7tm_1"/>
    <property type="match status" value="1"/>
</dbReference>
<dbReference type="PRINTS" id="PR00237">
    <property type="entry name" value="GPCRRHODOPSN"/>
</dbReference>
<dbReference type="PRINTS" id="PR00428">
    <property type="entry name" value="PROSTAGLNDNR"/>
</dbReference>
<dbReference type="PRINTS" id="PR01788">
    <property type="entry name" value="PROSTANOIDR"/>
</dbReference>
<dbReference type="PRINTS" id="PR00586">
    <property type="entry name" value="PRSTNOIDEP4R"/>
</dbReference>
<dbReference type="SUPFAM" id="SSF81321">
    <property type="entry name" value="Family A G protein-coupled receptor-like"/>
    <property type="match status" value="1"/>
</dbReference>
<dbReference type="PROSITE" id="PS00237">
    <property type="entry name" value="G_PROTEIN_RECEP_F1_1"/>
    <property type="match status" value="1"/>
</dbReference>
<dbReference type="PROSITE" id="PS50262">
    <property type="entry name" value="G_PROTEIN_RECEP_F1_2"/>
    <property type="match status" value="1"/>
</dbReference>
<sequence>MAEVGGTIPRSNRELQRCVLLTTTIMSIPGVNASFSSTPERLNSPVTIPAVMFIFGVVGNLVAIVVLCKSRKEQKETTFYTLVCGLAVTDLLGTLLVSPVTIATYMKGQWPGDQALCDYSTFILLFFGLSGLSIICAMSIERYLAINHAYFYSHYVDKRLAGLTLFAIYASNVLFCALPNMGLGRSERQYPGTWCFIDWTTNVTAYAAFSYMYAGFSSFLILATVLCNVLVCGALLRMHRQFMRRTSLGTEQHHAAAAAAVASVACRGHAGASPALQRLSDFRRRRSFRRIAGAEIQMVILLIATSLVVLICSIPLVVRVFINQLYQPNVVKDISRNPDLQAIRIASVNPILDPWIYILLRKTVLSKAIEKIKCLFCRIGGSGRDSSAQHCSESRRTSSAMSGHSRSFLARELKEISSTSQTLLYLPDLTESSLGGRNLLPGSHGMGLTQADTTSLRTLRISETSDSSQGQDSESVLLVDEVSGSHREEPASKGNSLQVTFPSETLKLSEKCI</sequence>
<evidence type="ECO:0000250" key="1"/>
<evidence type="ECO:0000250" key="2">
    <source>
        <dbReference type="UniProtKB" id="P35408"/>
    </source>
</evidence>
<evidence type="ECO:0000255" key="3"/>
<evidence type="ECO:0000255" key="4">
    <source>
        <dbReference type="PROSITE-ProRule" id="PRU00521"/>
    </source>
</evidence>
<evidence type="ECO:0000256" key="5">
    <source>
        <dbReference type="SAM" id="MobiDB-lite"/>
    </source>
</evidence>
<evidence type="ECO:0000269" key="6">
    <source>
    </source>
</evidence>
<evidence type="ECO:0000305" key="7"/>
<keyword id="KW-1003">Cell membrane</keyword>
<keyword id="KW-1015">Disulfide bond</keyword>
<keyword id="KW-0297">G-protein coupled receptor</keyword>
<keyword id="KW-0325">Glycoprotein</keyword>
<keyword id="KW-0472">Membrane</keyword>
<keyword id="KW-0597">Phosphoprotein</keyword>
<keyword id="KW-0675">Receptor</keyword>
<keyword id="KW-1185">Reference proteome</keyword>
<keyword id="KW-0807">Transducer</keyword>
<keyword id="KW-0812">Transmembrane</keyword>
<keyword id="KW-1133">Transmembrane helix</keyword>
<organism>
    <name type="scientific">Mus musculus</name>
    <name type="common">Mouse</name>
    <dbReference type="NCBI Taxonomy" id="10090"/>
    <lineage>
        <taxon>Eukaryota</taxon>
        <taxon>Metazoa</taxon>
        <taxon>Chordata</taxon>
        <taxon>Craniata</taxon>
        <taxon>Vertebrata</taxon>
        <taxon>Euteleostomi</taxon>
        <taxon>Mammalia</taxon>
        <taxon>Eutheria</taxon>
        <taxon>Euarchontoglires</taxon>
        <taxon>Glires</taxon>
        <taxon>Rodentia</taxon>
        <taxon>Myomorpha</taxon>
        <taxon>Muroidea</taxon>
        <taxon>Muridae</taxon>
        <taxon>Murinae</taxon>
        <taxon>Mus</taxon>
        <taxon>Mus</taxon>
    </lineage>
</organism>
<protein>
    <recommendedName>
        <fullName>Prostaglandin E2 receptor EP4 subtype</fullName>
        <shortName>PGE receptor EP4 subtype</shortName>
        <shortName>PGE2 receptor EP4 subtype</shortName>
    </recommendedName>
    <alternativeName>
        <fullName>Prostanoid EP4 receptor</fullName>
    </alternativeName>
</protein>
<feature type="chain" id="PRO_0000070065" description="Prostaglandin E2 receptor EP4 subtype">
    <location>
        <begin position="1"/>
        <end position="513"/>
    </location>
</feature>
<feature type="topological domain" description="Extracellular" evidence="3">
    <location>
        <begin position="1"/>
        <end position="44"/>
    </location>
</feature>
<feature type="transmembrane region" description="Helical; Name=1" evidence="3">
    <location>
        <begin position="45"/>
        <end position="68"/>
    </location>
</feature>
<feature type="topological domain" description="Cytoplasmic" evidence="3">
    <location>
        <begin position="69"/>
        <end position="80"/>
    </location>
</feature>
<feature type="transmembrane region" description="Helical; Name=2" evidence="3">
    <location>
        <begin position="81"/>
        <end position="104"/>
    </location>
</feature>
<feature type="topological domain" description="Extracellular" evidence="3">
    <location>
        <begin position="105"/>
        <end position="121"/>
    </location>
</feature>
<feature type="transmembrane region" description="Helical; Name=3" evidence="3">
    <location>
        <begin position="122"/>
        <end position="140"/>
    </location>
</feature>
<feature type="topological domain" description="Cytoplasmic" evidence="3">
    <location>
        <begin position="141"/>
        <end position="160"/>
    </location>
</feature>
<feature type="transmembrane region" description="Helical; Name=4" evidence="3">
    <location>
        <begin position="161"/>
        <end position="185"/>
    </location>
</feature>
<feature type="topological domain" description="Extracellular" evidence="3">
    <location>
        <begin position="186"/>
        <end position="209"/>
    </location>
</feature>
<feature type="transmembrane region" description="Helical; Name=5" evidence="3">
    <location>
        <begin position="210"/>
        <end position="236"/>
    </location>
</feature>
<feature type="topological domain" description="Cytoplasmic" evidence="3">
    <location>
        <begin position="237"/>
        <end position="295"/>
    </location>
</feature>
<feature type="transmembrane region" description="Helical; Name=6" evidence="3">
    <location>
        <begin position="296"/>
        <end position="323"/>
    </location>
</feature>
<feature type="topological domain" description="Extracellular" evidence="3">
    <location>
        <begin position="324"/>
        <end position="340"/>
    </location>
</feature>
<feature type="transmembrane region" description="Helical; Name=7" evidence="3">
    <location>
        <begin position="341"/>
        <end position="360"/>
    </location>
</feature>
<feature type="topological domain" description="Cytoplasmic" evidence="3">
    <location>
        <begin position="361"/>
        <end position="513"/>
    </location>
</feature>
<feature type="region of interest" description="Disordered" evidence="5">
    <location>
        <begin position="383"/>
        <end position="403"/>
    </location>
</feature>
<feature type="compositionally biased region" description="Polar residues" evidence="5">
    <location>
        <begin position="384"/>
        <end position="403"/>
    </location>
</feature>
<feature type="modified residue" description="Phosphoserine" evidence="2">
    <location>
        <position position="402"/>
    </location>
</feature>
<feature type="modified residue" description="Phosphoserine" evidence="2">
    <location>
        <position position="405"/>
    </location>
</feature>
<feature type="modified residue" description="Phosphoserine" evidence="2">
    <location>
        <position position="407"/>
    </location>
</feature>
<feature type="glycosylation site" description="N-linked (GlcNAc...) asparagine" evidence="3">
    <location>
        <position position="32"/>
    </location>
</feature>
<feature type="disulfide bond" evidence="4">
    <location>
        <begin position="117"/>
        <end position="195"/>
    </location>
</feature>
<gene>
    <name type="primary">Ptger4</name>
    <name type="synonym">Ptgerep4</name>
</gene>
<proteinExistence type="evidence at protein level"/>
<name>PE2R4_MOUSE</name>
<accession>P32240</accession>
<reference key="1">
    <citation type="journal article" date="1993" name="J. Biol. Chem.">
        <title>Cloning and expression of a cDNA for mouse prostaglandin E receptor EP2 subtype.</title>
        <authorList>
            <person name="Honda A."/>
            <person name="Sugimoto Y."/>
            <person name="Namba T."/>
            <person name="Watabe A."/>
            <person name="Irie A."/>
            <person name="Negishi M."/>
            <person name="Narumiya S."/>
            <person name="Ichikawa A."/>
        </authorList>
    </citation>
    <scope>NUCLEOTIDE SEQUENCE [MRNA]</scope>
    <source>
        <strain>BDF1</strain>
    </source>
</reference>
<reference key="2">
    <citation type="journal article" date="1996" name="J. Biol. Chem.">
        <title>Prostanoid receptors of murine NIH 3T3 and RAW 264.7 cells. Structure and expression of the murine prostaglandin EP4 receptor gene.</title>
        <authorList>
            <person name="Arakawa T."/>
            <person name="Laneuville O."/>
            <person name="Miller C.A."/>
            <person name="Lakkides K.M."/>
            <person name="Wingerd B.A."/>
            <person name="Dewitt D.L."/>
            <person name="Smith W.L."/>
        </authorList>
    </citation>
    <scope>NUCLEOTIDE SEQUENCE [GENOMIC DNA] OF 1-317</scope>
</reference>
<reference key="3">
    <citation type="journal article" date="2008" name="J. Biol. Chem.">
        <title>Prostaglandin E receptor type 4-associated protein interacts directly with NF-kappaB1 and attenuates macrophage activation.</title>
        <authorList>
            <person name="Minami M."/>
            <person name="Shimizu K."/>
            <person name="Okamoto Y."/>
            <person name="Folco E."/>
            <person name="Ilasaca M.L."/>
            <person name="Feinberg M.W."/>
            <person name="Aikawa M."/>
            <person name="Libby P."/>
        </authorList>
    </citation>
    <scope>INTERACTION WITH FEM1A</scope>
</reference>
<comment type="function">
    <text>Receptor for prostaglandin E2 (PGE2). The activity of this receptor is mediated by G(s) proteins that stimulate adenylate cyclase. Has a relaxing effect on smooth muscle. May play an important role in regulating renal hemodynamics, intestinal epithelial transport, adrenal aldosterone secretion, and uterine function.</text>
</comment>
<comment type="subunit">
    <text evidence="6">Interacts with FEM1A.</text>
</comment>
<comment type="subcellular location">
    <subcellularLocation>
        <location>Cell membrane</location>
        <topology>Multi-pass membrane protein</topology>
    </subcellularLocation>
</comment>
<comment type="tissue specificity">
    <text>Abundant expression in ileum, thymus and mastocytoma P-815 cells. Also observed in lung, spleen, heart and uterus.</text>
</comment>
<comment type="PTM">
    <text evidence="1">Phosphorylation mediates agonist-mediated desensitization by promoting cytoplasmic retention.</text>
</comment>
<comment type="similarity">
    <text evidence="4">Belongs to the G-protein coupled receptor 1 family.</text>
</comment>
<comment type="caution">
    <text evidence="7">Was originally designated as the EP2 subtype.</text>
</comment>